<reference key="1">
    <citation type="journal article" date="2008" name="J. Bacteriol.">
        <title>The pangenome structure of Escherichia coli: comparative genomic analysis of E. coli commensal and pathogenic isolates.</title>
        <authorList>
            <person name="Rasko D.A."/>
            <person name="Rosovitz M.J."/>
            <person name="Myers G.S.A."/>
            <person name="Mongodin E.F."/>
            <person name="Fricke W.F."/>
            <person name="Gajer P."/>
            <person name="Crabtree J."/>
            <person name="Sebaihia M."/>
            <person name="Thomson N.R."/>
            <person name="Chaudhuri R."/>
            <person name="Henderson I.R."/>
            <person name="Sperandio V."/>
            <person name="Ravel J."/>
        </authorList>
    </citation>
    <scope>NUCLEOTIDE SEQUENCE [LARGE SCALE GENOMIC DNA]</scope>
    <source>
        <strain>HS</strain>
    </source>
</reference>
<accession>A7ZWB5</accession>
<dbReference type="EMBL" id="CP000802">
    <property type="protein sequence ID" value="ABV04569.1"/>
    <property type="molecule type" value="Genomic_DNA"/>
</dbReference>
<dbReference type="RefSeq" id="WP_000246884.1">
    <property type="nucleotide sequence ID" value="NC_009800.1"/>
</dbReference>
<dbReference type="SMR" id="A7ZWB5"/>
<dbReference type="GeneID" id="93777256"/>
<dbReference type="KEGG" id="ecx:EcHS_A0171"/>
<dbReference type="HOGENOM" id="CLU_040318_1_2_6"/>
<dbReference type="GO" id="GO:0022627">
    <property type="term" value="C:cytosolic small ribosomal subunit"/>
    <property type="evidence" value="ECO:0007669"/>
    <property type="project" value="TreeGrafter"/>
</dbReference>
<dbReference type="GO" id="GO:0003735">
    <property type="term" value="F:structural constituent of ribosome"/>
    <property type="evidence" value="ECO:0007669"/>
    <property type="project" value="InterPro"/>
</dbReference>
<dbReference type="GO" id="GO:0006412">
    <property type="term" value="P:translation"/>
    <property type="evidence" value="ECO:0007669"/>
    <property type="project" value="UniProtKB-UniRule"/>
</dbReference>
<dbReference type="CDD" id="cd01425">
    <property type="entry name" value="RPS2"/>
    <property type="match status" value="1"/>
</dbReference>
<dbReference type="FunFam" id="1.10.287.610:FF:000001">
    <property type="entry name" value="30S ribosomal protein S2"/>
    <property type="match status" value="1"/>
</dbReference>
<dbReference type="Gene3D" id="3.40.50.10490">
    <property type="entry name" value="Glucose-6-phosphate isomerase like protein, domain 1"/>
    <property type="match status" value="1"/>
</dbReference>
<dbReference type="Gene3D" id="1.10.287.610">
    <property type="entry name" value="Helix hairpin bin"/>
    <property type="match status" value="1"/>
</dbReference>
<dbReference type="HAMAP" id="MF_00291_B">
    <property type="entry name" value="Ribosomal_uS2_B"/>
    <property type="match status" value="1"/>
</dbReference>
<dbReference type="InterPro" id="IPR001865">
    <property type="entry name" value="Ribosomal_uS2"/>
</dbReference>
<dbReference type="InterPro" id="IPR005706">
    <property type="entry name" value="Ribosomal_uS2_bac/mit/plastid"/>
</dbReference>
<dbReference type="InterPro" id="IPR018130">
    <property type="entry name" value="Ribosomal_uS2_CS"/>
</dbReference>
<dbReference type="InterPro" id="IPR023591">
    <property type="entry name" value="Ribosomal_uS2_flav_dom_sf"/>
</dbReference>
<dbReference type="NCBIfam" id="TIGR01011">
    <property type="entry name" value="rpsB_bact"/>
    <property type="match status" value="1"/>
</dbReference>
<dbReference type="PANTHER" id="PTHR12534">
    <property type="entry name" value="30S RIBOSOMAL PROTEIN S2 PROKARYOTIC AND ORGANELLAR"/>
    <property type="match status" value="1"/>
</dbReference>
<dbReference type="PANTHER" id="PTHR12534:SF0">
    <property type="entry name" value="SMALL RIBOSOMAL SUBUNIT PROTEIN US2M"/>
    <property type="match status" value="1"/>
</dbReference>
<dbReference type="Pfam" id="PF00318">
    <property type="entry name" value="Ribosomal_S2"/>
    <property type="match status" value="1"/>
</dbReference>
<dbReference type="PRINTS" id="PR00395">
    <property type="entry name" value="RIBOSOMALS2"/>
</dbReference>
<dbReference type="SUPFAM" id="SSF52313">
    <property type="entry name" value="Ribosomal protein S2"/>
    <property type="match status" value="1"/>
</dbReference>
<dbReference type="PROSITE" id="PS00962">
    <property type="entry name" value="RIBOSOMAL_S2_1"/>
    <property type="match status" value="1"/>
</dbReference>
<dbReference type="PROSITE" id="PS00963">
    <property type="entry name" value="RIBOSOMAL_S2_2"/>
    <property type="match status" value="1"/>
</dbReference>
<organism>
    <name type="scientific">Escherichia coli O9:H4 (strain HS)</name>
    <dbReference type="NCBI Taxonomy" id="331112"/>
    <lineage>
        <taxon>Bacteria</taxon>
        <taxon>Pseudomonadati</taxon>
        <taxon>Pseudomonadota</taxon>
        <taxon>Gammaproteobacteria</taxon>
        <taxon>Enterobacterales</taxon>
        <taxon>Enterobacteriaceae</taxon>
        <taxon>Escherichia</taxon>
    </lineage>
</organism>
<gene>
    <name evidence="1" type="primary">rpsB</name>
    <name type="ordered locus">EcHS_A0171</name>
</gene>
<protein>
    <recommendedName>
        <fullName evidence="1">Small ribosomal subunit protein uS2</fullName>
    </recommendedName>
    <alternativeName>
        <fullName evidence="2">30S ribosomal protein S2</fullName>
    </alternativeName>
</protein>
<keyword id="KW-0687">Ribonucleoprotein</keyword>
<keyword id="KW-0689">Ribosomal protein</keyword>
<sequence length="241" mass="26758">MATVSMRDMLKAGVHFGHQTRYWNPKMKPFIFGARNKVHIINLEKTVPMFNEALAELNKIASRKGKILFVGTKRAASEAVKDAALSCDQFFVNHRWLGGMLTNWKTVRQSIKRLKDLETQSQDGTFEKLTKKEALMRTRELEKLENSLGGIKDMGGLPDALFVIDADHEHIAIKEANNLGIPVFAIVDTNSDPDGVDFVIPGNDDAIRAVTLYLGAVAATVREGRSQDLASQAEESFVEAE</sequence>
<name>RS2_ECOHS</name>
<proteinExistence type="inferred from homology"/>
<comment type="similarity">
    <text evidence="1">Belongs to the universal ribosomal protein uS2 family.</text>
</comment>
<evidence type="ECO:0000255" key="1">
    <source>
        <dbReference type="HAMAP-Rule" id="MF_00291"/>
    </source>
</evidence>
<evidence type="ECO:0000305" key="2"/>
<feature type="chain" id="PRO_1000059260" description="Small ribosomal subunit protein uS2">
    <location>
        <begin position="1"/>
        <end position="241"/>
    </location>
</feature>